<name>UIMC1_MOUSE</name>
<gene>
    <name type="primary">Uimc1</name>
    <name type="synonym">Rap80</name>
    <name type="synonym">Rip110</name>
    <name type="synonym">Rxrip110</name>
</gene>
<feature type="chain" id="PRO_0000097548" description="BRCA1-A complex subunit RAP80">
    <location>
        <begin position="1"/>
        <end position="727"/>
    </location>
</feature>
<feature type="domain" description="UIM 1" evidence="4">
    <location>
        <begin position="80"/>
        <end position="99"/>
    </location>
</feature>
<feature type="domain" description="UIM 2" evidence="4">
    <location>
        <begin position="104"/>
        <end position="124"/>
    </location>
</feature>
<feature type="zinc finger region" description="UBZ4-type" evidence="5">
    <location>
        <begin position="510"/>
        <end position="537"/>
    </location>
</feature>
<feature type="region of interest" description="Necessary for transcriptional repression" evidence="1">
    <location>
        <begin position="1"/>
        <end position="101"/>
    </location>
</feature>
<feature type="region of interest" description="Disordered" evidence="6">
    <location>
        <begin position="1"/>
        <end position="23"/>
    </location>
</feature>
<feature type="region of interest" description="Disordered" evidence="6">
    <location>
        <begin position="45"/>
        <end position="70"/>
    </location>
</feature>
<feature type="region of interest" description="UIM-linker">
    <location>
        <begin position="97"/>
        <end position="103"/>
    </location>
</feature>
<feature type="region of interest" description="Necessary for interaction with NR6A1 N-terminus" evidence="3">
    <location>
        <begin position="100"/>
        <end position="200"/>
    </location>
</feature>
<feature type="region of interest" description="Disordered" evidence="6">
    <location>
        <begin position="133"/>
        <end position="206"/>
    </location>
</feature>
<feature type="region of interest" description="AIR">
    <location>
        <begin position="270"/>
        <end position="400"/>
    </location>
</feature>
<feature type="region of interest" description="Disordered" evidence="6">
    <location>
        <begin position="326"/>
        <end position="427"/>
    </location>
</feature>
<feature type="region of interest" description="Necessary for interaction with NR6A1 C-terminus" evidence="3">
    <location>
        <begin position="400"/>
        <end position="508"/>
    </location>
</feature>
<feature type="region of interest" description="Zinc-finger-like region">
    <location>
        <begin position="513"/>
        <end position="590"/>
    </location>
</feature>
<feature type="region of interest" description="Disordered" evidence="6">
    <location>
        <begin position="607"/>
        <end position="654"/>
    </location>
</feature>
<feature type="short sequence motif" description="LR motif">
    <location>
        <begin position="60"/>
        <end position="78"/>
    </location>
</feature>
<feature type="compositionally biased region" description="Basic and acidic residues" evidence="6">
    <location>
        <begin position="9"/>
        <end position="23"/>
    </location>
</feature>
<feature type="compositionally biased region" description="Basic residues" evidence="6">
    <location>
        <begin position="60"/>
        <end position="70"/>
    </location>
</feature>
<feature type="compositionally biased region" description="Basic and acidic residues" evidence="6">
    <location>
        <begin position="176"/>
        <end position="188"/>
    </location>
</feature>
<feature type="compositionally biased region" description="Low complexity" evidence="6">
    <location>
        <begin position="195"/>
        <end position="206"/>
    </location>
</feature>
<feature type="compositionally biased region" description="Basic and acidic residues" evidence="6">
    <location>
        <begin position="355"/>
        <end position="364"/>
    </location>
</feature>
<feature type="compositionally biased region" description="Basic and acidic residues" evidence="6">
    <location>
        <begin position="641"/>
        <end position="654"/>
    </location>
</feature>
<feature type="binding site" evidence="5">
    <location>
        <position position="513"/>
    </location>
    <ligand>
        <name>Zn(2+)</name>
        <dbReference type="ChEBI" id="CHEBI:29105"/>
    </ligand>
</feature>
<feature type="binding site" evidence="5">
    <location>
        <position position="516"/>
    </location>
    <ligand>
        <name>Zn(2+)</name>
        <dbReference type="ChEBI" id="CHEBI:29105"/>
    </ligand>
</feature>
<feature type="binding site" evidence="5">
    <location>
        <position position="528"/>
    </location>
    <ligand>
        <name>Zn(2+)</name>
        <dbReference type="ChEBI" id="CHEBI:29105"/>
    </ligand>
</feature>
<feature type="binding site" evidence="5">
    <location>
        <position position="532"/>
    </location>
    <ligand>
        <name>Zn(2+)</name>
        <dbReference type="ChEBI" id="CHEBI:29105"/>
    </ligand>
</feature>
<feature type="modified residue" description="Phosphoserine" evidence="3">
    <location>
        <position position="29"/>
    </location>
</feature>
<feature type="modified residue" description="Phosphoserine" evidence="13">
    <location>
        <position position="44"/>
    </location>
</feature>
<feature type="modified residue" description="Phosphoserine" evidence="13">
    <location>
        <position position="46"/>
    </location>
</feature>
<feature type="modified residue" description="Phosphothreonine" evidence="13">
    <location>
        <position position="51"/>
    </location>
</feature>
<feature type="modified residue" description="Phosphoserine" evidence="3">
    <location>
        <position position="140"/>
    </location>
</feature>
<feature type="modified residue" description="Phosphoserine" evidence="3">
    <location>
        <position position="205"/>
    </location>
</feature>
<feature type="modified residue" description="Phosphoserine" evidence="2">
    <location>
        <position position="379"/>
    </location>
</feature>
<feature type="modified residue" description="Phosphoserine" evidence="3">
    <location>
        <position position="402"/>
    </location>
</feature>
<feature type="modified residue" description="Phosphoserine" evidence="3">
    <location>
        <position position="474"/>
    </location>
</feature>
<feature type="modified residue" description="Phosphoserine" evidence="3">
    <location>
        <position position="637"/>
    </location>
</feature>
<feature type="modified residue" description="Phosphoserine" evidence="13">
    <location>
        <position position="665"/>
    </location>
</feature>
<feature type="modified residue" description="Phosphoserine" evidence="13">
    <location>
        <position position="689"/>
    </location>
</feature>
<feature type="cross-link" description="Glycyl lysine isopeptide (Lys-Gly) (interchain with G-Cter in SUMO2)" evidence="3">
    <location>
        <position position="20"/>
    </location>
</feature>
<feature type="cross-link" description="Glycyl lysine isopeptide (Lys-Gly) (interchain with G-Cter in SUMO2)" evidence="3">
    <location>
        <position position="31"/>
    </location>
</feature>
<feature type="cross-link" description="Glycyl lysine isopeptide (Lys-Gly) (interchain with G-Cter in SUMO2)" evidence="3">
    <location>
        <position position="75"/>
    </location>
</feature>
<feature type="cross-link" description="Glycyl lysine isopeptide (Lys-Gly) (interchain with G-Cter in SUMO2)" evidence="3">
    <location>
        <position position="90"/>
    </location>
</feature>
<feature type="cross-link" description="Glycyl lysine isopeptide (Lys-Gly) (interchain with G-Cter in SUMO2)" evidence="3">
    <location>
        <position position="245"/>
    </location>
</feature>
<feature type="cross-link" description="Glycyl lysine isopeptide (Lys-Gly) (interchain with G-Cter in SUMO2)" evidence="3">
    <location>
        <position position="382"/>
    </location>
</feature>
<feature type="cross-link" description="Glycyl lysine isopeptide (Lys-Gly) (interchain with G-Cter in SUMO2)" evidence="3">
    <location>
        <position position="387"/>
    </location>
</feature>
<feature type="cross-link" description="Glycyl lysine isopeptide (Lys-Gly) (interchain with G-Cter in SUMO2)" evidence="3">
    <location>
        <position position="436"/>
    </location>
</feature>
<feature type="cross-link" description="Glycyl lysine isopeptide (Lys-Gly) (interchain with G-Cter in SUMO2)" evidence="3">
    <location>
        <position position="552"/>
    </location>
</feature>
<feature type="cross-link" description="Glycyl lysine isopeptide (Lys-Gly) (interchain with G-Cter in SUMO2)" evidence="3">
    <location>
        <position position="570"/>
    </location>
</feature>
<feature type="cross-link" description="Glycyl lysine isopeptide (Lys-Gly) (interchain with G-Cter in SUMO2)" evidence="3">
    <location>
        <position position="595"/>
    </location>
</feature>
<feature type="cross-link" description="Glycyl lysine isopeptide (Lys-Gly) (interchain with G-Cter in SUMO2)" evidence="3">
    <location>
        <position position="617"/>
    </location>
</feature>
<feature type="cross-link" description="Glycyl lysine isopeptide (Lys-Gly) (interchain with G-Cter in SUMO2)" evidence="3">
    <location>
        <position position="652"/>
    </location>
</feature>
<feature type="cross-link" description="Glycyl lysine isopeptide (Lys-Gly) (interchain with G-Cter in SUMO2)" evidence="3">
    <location>
        <position position="708"/>
    </location>
</feature>
<feature type="splice variant" id="VSP_037266" description="In isoform 3." evidence="11">
    <location>
        <begin position="120"/>
        <end position="400"/>
    </location>
</feature>
<feature type="splice variant" id="VSP_037267" description="In isoform 2." evidence="10">
    <original>SSQGLF</original>
    <variation>HCSFDQ</variation>
    <location>
        <begin position="401"/>
        <end position="406"/>
    </location>
</feature>
<feature type="splice variant" id="VSP_037268" description="In isoform 2." evidence="10">
    <location>
        <begin position="407"/>
        <end position="727"/>
    </location>
</feature>
<feature type="sequence conflict" description="In Ref. 1; BAC38875." evidence="12" ref="1">
    <original>Q</original>
    <variation>R</variation>
    <location>
        <position position="377"/>
    </location>
</feature>
<feature type="sequence conflict" description="In Ref. 1; BAC35106/BAC38875/BAE36094." evidence="12" ref="1">
    <original>I</original>
    <variation>T</variation>
    <location>
        <position position="450"/>
    </location>
</feature>
<feature type="sequence conflict" description="In Ref. 2; AAH40808." evidence="12" ref="2">
    <original>D</original>
    <variation>G</variation>
    <location>
        <position position="554"/>
    </location>
</feature>
<feature type="sequence conflict" description="In Ref. 3; AAC52167." evidence="12" ref="3">
    <original>G</original>
    <variation>E</variation>
    <location>
        <position position="722"/>
    </location>
</feature>
<feature type="helix" evidence="14">
    <location>
        <begin position="81"/>
        <end position="119"/>
    </location>
</feature>
<protein>
    <recommendedName>
        <fullName>BRCA1-A complex subunit RAP80</fullName>
    </recommendedName>
    <alternativeName>
        <fullName>Receptor-associated protein 80</fullName>
    </alternativeName>
    <alternativeName>
        <fullName>Ubiquitin interaction motif-containing protein 1</fullName>
    </alternativeName>
</protein>
<proteinExistence type="evidence at protein level"/>
<reference key="1">
    <citation type="journal article" date="2005" name="Science">
        <title>The transcriptional landscape of the mammalian genome.</title>
        <authorList>
            <person name="Carninci P."/>
            <person name="Kasukawa T."/>
            <person name="Katayama S."/>
            <person name="Gough J."/>
            <person name="Frith M.C."/>
            <person name="Maeda N."/>
            <person name="Oyama R."/>
            <person name="Ravasi T."/>
            <person name="Lenhard B."/>
            <person name="Wells C."/>
            <person name="Kodzius R."/>
            <person name="Shimokawa K."/>
            <person name="Bajic V.B."/>
            <person name="Brenner S.E."/>
            <person name="Batalov S."/>
            <person name="Forrest A.R."/>
            <person name="Zavolan M."/>
            <person name="Davis M.J."/>
            <person name="Wilming L.G."/>
            <person name="Aidinis V."/>
            <person name="Allen J.E."/>
            <person name="Ambesi-Impiombato A."/>
            <person name="Apweiler R."/>
            <person name="Aturaliya R.N."/>
            <person name="Bailey T.L."/>
            <person name="Bansal M."/>
            <person name="Baxter L."/>
            <person name="Beisel K.W."/>
            <person name="Bersano T."/>
            <person name="Bono H."/>
            <person name="Chalk A.M."/>
            <person name="Chiu K.P."/>
            <person name="Choudhary V."/>
            <person name="Christoffels A."/>
            <person name="Clutterbuck D.R."/>
            <person name="Crowe M.L."/>
            <person name="Dalla E."/>
            <person name="Dalrymple B.P."/>
            <person name="de Bono B."/>
            <person name="Della Gatta G."/>
            <person name="di Bernardo D."/>
            <person name="Down T."/>
            <person name="Engstrom P."/>
            <person name="Fagiolini M."/>
            <person name="Faulkner G."/>
            <person name="Fletcher C.F."/>
            <person name="Fukushima T."/>
            <person name="Furuno M."/>
            <person name="Futaki S."/>
            <person name="Gariboldi M."/>
            <person name="Georgii-Hemming P."/>
            <person name="Gingeras T.R."/>
            <person name="Gojobori T."/>
            <person name="Green R.E."/>
            <person name="Gustincich S."/>
            <person name="Harbers M."/>
            <person name="Hayashi Y."/>
            <person name="Hensch T.K."/>
            <person name="Hirokawa N."/>
            <person name="Hill D."/>
            <person name="Huminiecki L."/>
            <person name="Iacono M."/>
            <person name="Ikeo K."/>
            <person name="Iwama A."/>
            <person name="Ishikawa T."/>
            <person name="Jakt M."/>
            <person name="Kanapin A."/>
            <person name="Katoh M."/>
            <person name="Kawasawa Y."/>
            <person name="Kelso J."/>
            <person name="Kitamura H."/>
            <person name="Kitano H."/>
            <person name="Kollias G."/>
            <person name="Krishnan S.P."/>
            <person name="Kruger A."/>
            <person name="Kummerfeld S.K."/>
            <person name="Kurochkin I.V."/>
            <person name="Lareau L.F."/>
            <person name="Lazarevic D."/>
            <person name="Lipovich L."/>
            <person name="Liu J."/>
            <person name="Liuni S."/>
            <person name="McWilliam S."/>
            <person name="Madan Babu M."/>
            <person name="Madera M."/>
            <person name="Marchionni L."/>
            <person name="Matsuda H."/>
            <person name="Matsuzawa S."/>
            <person name="Miki H."/>
            <person name="Mignone F."/>
            <person name="Miyake S."/>
            <person name="Morris K."/>
            <person name="Mottagui-Tabar S."/>
            <person name="Mulder N."/>
            <person name="Nakano N."/>
            <person name="Nakauchi H."/>
            <person name="Ng P."/>
            <person name="Nilsson R."/>
            <person name="Nishiguchi S."/>
            <person name="Nishikawa S."/>
            <person name="Nori F."/>
            <person name="Ohara O."/>
            <person name="Okazaki Y."/>
            <person name="Orlando V."/>
            <person name="Pang K.C."/>
            <person name="Pavan W.J."/>
            <person name="Pavesi G."/>
            <person name="Pesole G."/>
            <person name="Petrovsky N."/>
            <person name="Piazza S."/>
            <person name="Reed J."/>
            <person name="Reid J.F."/>
            <person name="Ring B.Z."/>
            <person name="Ringwald M."/>
            <person name="Rost B."/>
            <person name="Ruan Y."/>
            <person name="Salzberg S.L."/>
            <person name="Sandelin A."/>
            <person name="Schneider C."/>
            <person name="Schoenbach C."/>
            <person name="Sekiguchi K."/>
            <person name="Semple C.A."/>
            <person name="Seno S."/>
            <person name="Sessa L."/>
            <person name="Sheng Y."/>
            <person name="Shibata Y."/>
            <person name="Shimada H."/>
            <person name="Shimada K."/>
            <person name="Silva D."/>
            <person name="Sinclair B."/>
            <person name="Sperling S."/>
            <person name="Stupka E."/>
            <person name="Sugiura K."/>
            <person name="Sultana R."/>
            <person name="Takenaka Y."/>
            <person name="Taki K."/>
            <person name="Tammoja K."/>
            <person name="Tan S.L."/>
            <person name="Tang S."/>
            <person name="Taylor M.S."/>
            <person name="Tegner J."/>
            <person name="Teichmann S.A."/>
            <person name="Ueda H.R."/>
            <person name="van Nimwegen E."/>
            <person name="Verardo R."/>
            <person name="Wei C.L."/>
            <person name="Yagi K."/>
            <person name="Yamanishi H."/>
            <person name="Zabarovsky E."/>
            <person name="Zhu S."/>
            <person name="Zimmer A."/>
            <person name="Hide W."/>
            <person name="Bult C."/>
            <person name="Grimmond S.M."/>
            <person name="Teasdale R.D."/>
            <person name="Liu E.T."/>
            <person name="Brusic V."/>
            <person name="Quackenbush J."/>
            <person name="Wahlestedt C."/>
            <person name="Mattick J.S."/>
            <person name="Hume D.A."/>
            <person name="Kai C."/>
            <person name="Sasaki D."/>
            <person name="Tomaru Y."/>
            <person name="Fukuda S."/>
            <person name="Kanamori-Katayama M."/>
            <person name="Suzuki M."/>
            <person name="Aoki J."/>
            <person name="Arakawa T."/>
            <person name="Iida J."/>
            <person name="Imamura K."/>
            <person name="Itoh M."/>
            <person name="Kato T."/>
            <person name="Kawaji H."/>
            <person name="Kawagashira N."/>
            <person name="Kawashima T."/>
            <person name="Kojima M."/>
            <person name="Kondo S."/>
            <person name="Konno H."/>
            <person name="Nakano K."/>
            <person name="Ninomiya N."/>
            <person name="Nishio T."/>
            <person name="Okada M."/>
            <person name="Plessy C."/>
            <person name="Shibata K."/>
            <person name="Shiraki T."/>
            <person name="Suzuki S."/>
            <person name="Tagami M."/>
            <person name="Waki K."/>
            <person name="Watahiki A."/>
            <person name="Okamura-Oho Y."/>
            <person name="Suzuki H."/>
            <person name="Kawai J."/>
            <person name="Hayashizaki Y."/>
        </authorList>
    </citation>
    <scope>NUCLEOTIDE SEQUENCE [LARGE SCALE MRNA] (ISOFORMS 1 AND 3)</scope>
    <source>
        <strain>C57BL/6J</strain>
        <tissue>Extraembryonic tissue</tissue>
        <tissue>Kidney</tissue>
        <tissue>Placenta</tissue>
        <tissue>Thymus</tissue>
    </source>
</reference>
<reference key="2">
    <citation type="journal article" date="2004" name="Genome Res.">
        <title>The status, quality, and expansion of the NIH full-length cDNA project: the Mammalian Gene Collection (MGC).</title>
        <authorList>
            <consortium name="The MGC Project Team"/>
        </authorList>
    </citation>
    <scope>NUCLEOTIDE SEQUENCE [LARGE SCALE MRNA] (ISOFORMS 1 AND 2)</scope>
    <source>
        <strain>C57BL/6J</strain>
        <strain>FVB/N</strain>
        <tissue>Mammary cancer</tissue>
        <tissue>Mammary tumor</tissue>
    </source>
</reference>
<reference key="3">
    <citation type="journal article" date="1995" name="Mol. Endocrinol.">
        <title>Isolation of proteins that interact specifically with the retinoid X receptor: two novel orphan receptors.</title>
        <authorList>
            <person name="Seol W."/>
            <person name="Choi H.S."/>
            <person name="Moore D.D."/>
        </authorList>
    </citation>
    <scope>NUCLEOTIDE SEQUENCE [MRNA] OF 148-727 (ISOFORM 1)</scope>
    <scope>INTERACTION WITH NR6A1</scope>
    <source>
        <tissue>Liver</tissue>
    </source>
</reference>
<reference key="4">
    <citation type="journal article" date="2004" name="Biol. Reprod.">
        <title>Tsp57: a novel gene induced during a specific stage of spermatogenesis.</title>
        <authorList>
            <person name="Kim Y.-S."/>
            <person name="Nakanishi G."/>
            <person name="Oudes A.J."/>
            <person name="Kim K.H."/>
            <person name="Wang H."/>
            <person name="Kilpatrick D.L."/>
            <person name="Jetten A.M."/>
        </authorList>
    </citation>
    <scope>INTERACTION WITH TSP57</scope>
</reference>
<reference key="5">
    <citation type="journal article" date="2010" name="Cell">
        <title>A tissue-specific atlas of mouse protein phosphorylation and expression.</title>
        <authorList>
            <person name="Huttlin E.L."/>
            <person name="Jedrychowski M.P."/>
            <person name="Elias J.E."/>
            <person name="Goswami T."/>
            <person name="Rad R."/>
            <person name="Beausoleil S.A."/>
            <person name="Villen J."/>
            <person name="Haas W."/>
            <person name="Sowa M.E."/>
            <person name="Gygi S.P."/>
        </authorList>
    </citation>
    <scope>PHOSPHORYLATION [LARGE SCALE ANALYSIS] AT SER-44; SER-46; THR-51; SER-665 AND SER-689</scope>
    <scope>IDENTIFICATION BY MASS SPECTROMETRY [LARGE SCALE ANALYSIS]</scope>
    <source>
        <tissue>Lung</tissue>
        <tissue>Pancreas</tissue>
        <tissue>Spleen</tissue>
        <tissue>Testis</tissue>
    </source>
</reference>
<reference key="6">
    <citation type="journal article" date="2009" name="EMBO J.">
        <title>Structural basis for specific recognition of Lys 63-linked polyubiquitin chains by tandem UIMs of RAP80.</title>
        <authorList>
            <person name="Sato Y."/>
            <person name="Yoshikawa A."/>
            <person name="Mimura H."/>
            <person name="Yamashita M."/>
            <person name="Yamagata A."/>
            <person name="Fukai S."/>
        </authorList>
    </citation>
    <scope>X-RAY CRYSTALLOGRAPHY (2.2 ANGSTROMS) OF 80-120 IN COMPLEX WITH DI-UBIQUITIN</scope>
    <scope>FUNCTION IN UBIQUITIN BINDING</scope>
    <scope>UIM DOMAINS</scope>
</reference>
<sequence length="727" mass="81478">MPRRKKKIKEASESQNLEKKDLETSSCVSIKKKRRLEDLLIVISDSDGEETKEENGLQKTKTKQSNRSKCLAKRKVAHMSEEEQFALALKMSEQEAREVNNQEEKEEELLRKAIAESLNSCWSSAASATRSRPLAAELSSHSHQENTKDSGTTEGVWQLVPPSLCKGSHVSQGNEAEQRKEPWDHNENTEEEPVSGSSGSWDQSSQPVFENENVKCFDRCTGHLAEHTQCGKPQESTGSGYAFSKAVQGRGDTSRQCLPIPADTKGLQDTGGTVHYYWGIPFCPAGVDPNQYTNVILCQLEVYQKSLKMAQRQLVKKRGFGEPVLPRPPFLIQNECGQEDQTSDKNEGISEDMGDEAKEERQESRASVWHSETKDFQKSPIKSLKQKLLLEEEPTTSRGQSSQGLFVEETSEEGLKSSEGDNSVPTTQSIAALTSKRSLVLMPESSAEEITVCPETQLSFLEPLDLNREDSPDSRELPIEVRMAVGDKQVANREDCMKENPPPAVSSSTRVSCPLCNQDFPPTKIEQHAMYCNGLMEQETVLTRRRREAKNKSDGRTAAQPALDANRKEKCYLCKSLVPLGEYQCHVEACLQLAKVDREDGIEGTRRPRVCAPVEGKQQQRLKKSKDKGHSQGRLLSLLEQSEHRTTGVEKKPKYSEVRTFRMPSPEVEEASCSREMQSTLSQLNLNESPIKSFVPVSEATNCLVDFKEQFAFRSRTKSGRGRRRKS</sequence>
<comment type="function">
    <text evidence="3 8">Ubiquitin-binding protein. Specifically recognizes and binds 'Lys-63'-linked ubiquitin (PubMed:19536136). Plays a central role in the BRCA1-A complex by specifically binding 'Lys-63'-linked ubiquitinated histones H2A and H2AX at DNA lesions sites, leading to target the BRCA1-BARD1 heterodimer to sites of DNA damage at double-strand breaks (DSBs). The BRCA1-A complex also possesses deubiquitinase activity that specifically removes 'Lys-63'-linked ubiquitin on histones H2A and H2AX. Also weakly binds monoubiquitin but with much less affinity than 'Lys-63'-linked ubiquitin. May interact with monoubiquitinated histones H2A and H2B; the relevance of such results is however unclear in vivo. Does not bind Lys-48'-linked ubiquitin. May indirectly act as a transcriptional repressor by inhibiting the interaction of NR6A1 with the corepressor NCOR1 (By similarity).</text>
</comment>
<comment type="subunit">
    <text evidence="3 7 9">Component of the ARISC complex, at least composed of UIMC1/RAP80, ABRAXAS1, BRCC3/BRCC36, BABAM2 and BABAM1/NBA1 (By similarity). Component of the BRCA1-A complex, at least composed of the BRCA1, BARD1, UIMC1/RAP80, ABRAXAS1, BRCC3/BRCC36, BABAM2 and BABAM1/NBA1 (By similarity). In the BRCA1-A complex, interacts directly with ABRAXAS1 (By similarity). Interacts with ESR1 (By similarity). Interacts with UBE2I (By similarity). Interacts with NR6A1 (PubMed:7760852). Interacts with TSP57 (PubMed:12954732). Interacts with TRAIP (By similarity).</text>
</comment>
<comment type="interaction">
    <interactant intactId="EBI-7068640">
        <id>Q5U5Q9</id>
    </interactant>
    <interactant intactId="EBI-413074">
        <id>P62991</id>
        <label>Ubc</label>
    </interactant>
    <organismsDiffer>false</organismsDiffer>
    <experiments>2</experiments>
</comment>
<comment type="subcellular location">
    <subcellularLocation>
        <location evidence="3">Nucleus</location>
    </subcellularLocation>
    <text evidence="3">Localizes at sites of DNA damage at double-strand breaks (DSBs).</text>
</comment>
<comment type="alternative products">
    <event type="alternative splicing"/>
    <isoform>
        <id>Q5U5Q9-1</id>
        <name>1</name>
        <sequence type="displayed"/>
    </isoform>
    <isoform>
        <id>Q5U5Q9-2</id>
        <name>2</name>
        <sequence type="described" ref="VSP_037267 VSP_037268"/>
    </isoform>
    <isoform>
        <id>Q5U5Q9-3</id>
        <name>3</name>
        <sequence type="described" ref="VSP_037266"/>
    </isoform>
</comment>
<comment type="domain">
    <text evidence="8">The tandem UIM domains form a continuous 60 Angstrom-long alpha-helix and mediate binding to 'Lys-63'-linked ubiquitins. UIM1 and UIM2 bind to the proximal and distal ubiquitin moieties and recognize an 'Ile-44'-centered hydrophobic patch. Since UIMs don't interact with the 'Lys-63' isopeptide bond the UIM-linker region between the 2 UIM domains determines the selectivity for 'Lys-63'-linkage, and its length is very important for specificity.</text>
</comment>
<comment type="domain">
    <text evidence="3">The Abraxas-interacting region (AIR) mediates the interaction with ABRAXAS1.</text>
</comment>
<comment type="PTM">
    <text evidence="3">Sumoylated.</text>
</comment>
<comment type="PTM">
    <text evidence="3">Phosphorylated upon DNA damage by ATM or ATR.</text>
</comment>
<comment type="similarity">
    <text evidence="12">Belongs to the RAP80 family.</text>
</comment>
<comment type="sequence caution" evidence="12">
    <conflict type="erroneous initiation">
        <sequence resource="EMBL-CDS" id="AAH37092"/>
    </conflict>
    <text>Extended N-terminus.</text>
</comment>
<organism>
    <name type="scientific">Mus musculus</name>
    <name type="common">Mouse</name>
    <dbReference type="NCBI Taxonomy" id="10090"/>
    <lineage>
        <taxon>Eukaryota</taxon>
        <taxon>Metazoa</taxon>
        <taxon>Chordata</taxon>
        <taxon>Craniata</taxon>
        <taxon>Vertebrata</taxon>
        <taxon>Euteleostomi</taxon>
        <taxon>Mammalia</taxon>
        <taxon>Eutheria</taxon>
        <taxon>Euarchontoglires</taxon>
        <taxon>Glires</taxon>
        <taxon>Rodentia</taxon>
        <taxon>Myomorpha</taxon>
        <taxon>Muroidea</taxon>
        <taxon>Muridae</taxon>
        <taxon>Murinae</taxon>
        <taxon>Mus</taxon>
        <taxon>Mus</taxon>
    </lineage>
</organism>
<evidence type="ECO:0000250" key="1"/>
<evidence type="ECO:0000250" key="2">
    <source>
        <dbReference type="UniProtKB" id="Q5PQK4"/>
    </source>
</evidence>
<evidence type="ECO:0000250" key="3">
    <source>
        <dbReference type="UniProtKB" id="Q96RL1"/>
    </source>
</evidence>
<evidence type="ECO:0000255" key="4">
    <source>
        <dbReference type="PROSITE-ProRule" id="PRU00213"/>
    </source>
</evidence>
<evidence type="ECO:0000255" key="5">
    <source>
        <dbReference type="PROSITE-ProRule" id="PRU01256"/>
    </source>
</evidence>
<evidence type="ECO:0000256" key="6">
    <source>
        <dbReference type="SAM" id="MobiDB-lite"/>
    </source>
</evidence>
<evidence type="ECO:0000269" key="7">
    <source>
    </source>
</evidence>
<evidence type="ECO:0000269" key="8">
    <source>
    </source>
</evidence>
<evidence type="ECO:0000269" key="9">
    <source>
    </source>
</evidence>
<evidence type="ECO:0000303" key="10">
    <source>
    </source>
</evidence>
<evidence type="ECO:0000303" key="11">
    <source>
    </source>
</evidence>
<evidence type="ECO:0000305" key="12"/>
<evidence type="ECO:0007744" key="13">
    <source>
    </source>
</evidence>
<evidence type="ECO:0007829" key="14">
    <source>
        <dbReference type="PDB" id="3A1Q"/>
    </source>
</evidence>
<accession>Q5U5Q9</accession>
<accession>Q3TU77</accession>
<accession>Q60811</accession>
<accession>Q8C3Z8</accession>
<accession>Q8C719</accession>
<accession>Q8K1X7</accession>
<keyword id="KW-0002">3D-structure</keyword>
<keyword id="KW-0025">Alternative splicing</keyword>
<keyword id="KW-0156">Chromatin regulator</keyword>
<keyword id="KW-0227">DNA damage</keyword>
<keyword id="KW-0234">DNA repair</keyword>
<keyword id="KW-1017">Isopeptide bond</keyword>
<keyword id="KW-0479">Metal-binding</keyword>
<keyword id="KW-0539">Nucleus</keyword>
<keyword id="KW-0597">Phosphoprotein</keyword>
<keyword id="KW-1185">Reference proteome</keyword>
<keyword id="KW-0677">Repeat</keyword>
<keyword id="KW-0804">Transcription</keyword>
<keyword id="KW-0805">Transcription regulation</keyword>
<keyword id="KW-0832">Ubl conjugation</keyword>
<keyword id="KW-0862">Zinc</keyword>
<keyword id="KW-0863">Zinc-finger</keyword>
<dbReference type="EMBL" id="AK052704">
    <property type="protein sequence ID" value="BAC35106.1"/>
    <property type="molecule type" value="mRNA"/>
</dbReference>
<dbReference type="EMBL" id="AK083342">
    <property type="protein sequence ID" value="BAC38875.1"/>
    <property type="molecule type" value="mRNA"/>
</dbReference>
<dbReference type="EMBL" id="AK160926">
    <property type="protein sequence ID" value="BAE36094.1"/>
    <property type="molecule type" value="mRNA"/>
</dbReference>
<dbReference type="EMBL" id="BC037092">
    <property type="protein sequence ID" value="AAH37092.1"/>
    <property type="status" value="ALT_INIT"/>
    <property type="molecule type" value="mRNA"/>
</dbReference>
<dbReference type="EMBL" id="BC040808">
    <property type="protein sequence ID" value="AAH40808.1"/>
    <property type="molecule type" value="mRNA"/>
</dbReference>
<dbReference type="EMBL" id="U22015">
    <property type="protein sequence ID" value="AAC52167.1"/>
    <property type="molecule type" value="mRNA"/>
</dbReference>
<dbReference type="CCDS" id="CCDS36671.1">
    <molecule id="Q5U5Q9-1"/>
</dbReference>
<dbReference type="CCDS" id="CCDS79189.1">
    <molecule id="Q5U5Q9-3"/>
</dbReference>
<dbReference type="RefSeq" id="NP_001280589.1">
    <property type="nucleotide sequence ID" value="NM_001293660.1"/>
</dbReference>
<dbReference type="RefSeq" id="NP_035437.1">
    <property type="nucleotide sequence ID" value="NM_011307.2"/>
</dbReference>
<dbReference type="RefSeq" id="XP_006517229.1">
    <property type="nucleotide sequence ID" value="XM_006517166.2"/>
</dbReference>
<dbReference type="PDB" id="3A1Q">
    <property type="method" value="X-ray"/>
    <property type="resolution" value="2.20 A"/>
    <property type="chains" value="C/F=80-120"/>
</dbReference>
<dbReference type="PDB" id="6GVW">
    <property type="method" value="X-ray"/>
    <property type="resolution" value="3.75 A"/>
    <property type="chains" value="E/J=275-334"/>
</dbReference>
<dbReference type="PDBsum" id="3A1Q"/>
<dbReference type="PDBsum" id="6GVW"/>
<dbReference type="SMR" id="Q5U5Q9"/>
<dbReference type="BioGRID" id="203041">
    <property type="interactions" value="3"/>
</dbReference>
<dbReference type="ComplexPortal" id="CPX-4702">
    <property type="entry name" value="BRCA1-A complex"/>
</dbReference>
<dbReference type="FunCoup" id="Q5U5Q9">
    <property type="interactions" value="2683"/>
</dbReference>
<dbReference type="IntAct" id="Q5U5Q9">
    <property type="interactions" value="1"/>
</dbReference>
<dbReference type="MINT" id="Q5U5Q9"/>
<dbReference type="STRING" id="10090.ENSMUSP00000026997"/>
<dbReference type="GlyGen" id="Q5U5Q9">
    <property type="glycosylation" value="2 sites, 1 O-linked glycan (2 sites)"/>
</dbReference>
<dbReference type="iPTMnet" id="Q5U5Q9"/>
<dbReference type="PhosphoSitePlus" id="Q5U5Q9"/>
<dbReference type="jPOST" id="Q5U5Q9"/>
<dbReference type="PaxDb" id="10090-ENSMUSP00000122196"/>
<dbReference type="PeptideAtlas" id="Q5U5Q9"/>
<dbReference type="ProteomicsDB" id="298381">
    <molecule id="Q5U5Q9-1"/>
</dbReference>
<dbReference type="ProteomicsDB" id="298382">
    <molecule id="Q5U5Q9-2"/>
</dbReference>
<dbReference type="ProteomicsDB" id="298383">
    <molecule id="Q5U5Q9-3"/>
</dbReference>
<dbReference type="Pumba" id="Q5U5Q9"/>
<dbReference type="DNASU" id="20184"/>
<dbReference type="GeneID" id="20184"/>
<dbReference type="KEGG" id="mmu:20184"/>
<dbReference type="UCSC" id="uc007qpv.2">
    <molecule id="Q5U5Q9-1"/>
    <property type="organism name" value="mouse"/>
</dbReference>
<dbReference type="UCSC" id="uc007qpw.2">
    <molecule id="Q5U5Q9-3"/>
    <property type="organism name" value="mouse"/>
</dbReference>
<dbReference type="AGR" id="MGI:103185"/>
<dbReference type="CTD" id="51720"/>
<dbReference type="MGI" id="MGI:103185">
    <property type="gene designation" value="Uimc1"/>
</dbReference>
<dbReference type="eggNOG" id="ENOG502QQGN">
    <property type="taxonomic scope" value="Eukaryota"/>
</dbReference>
<dbReference type="InParanoid" id="Q5U5Q9"/>
<dbReference type="PhylomeDB" id="Q5U5Q9"/>
<dbReference type="Reactome" id="R-MMU-5689901">
    <property type="pathway name" value="Metalloprotease DUBs"/>
</dbReference>
<dbReference type="Reactome" id="R-MMU-5693565">
    <property type="pathway name" value="Recruitment and ATM-mediated phosphorylation of repair and signaling proteins at DNA double strand breaks"/>
</dbReference>
<dbReference type="Reactome" id="R-MMU-5693571">
    <property type="pathway name" value="Nonhomologous End-Joining (NHEJ)"/>
</dbReference>
<dbReference type="Reactome" id="R-MMU-5693607">
    <property type="pathway name" value="Processing of DNA double-strand break ends"/>
</dbReference>
<dbReference type="Reactome" id="R-MMU-69473">
    <property type="pathway name" value="G2/M DNA damage checkpoint"/>
</dbReference>
<dbReference type="BioGRID-ORCS" id="20184">
    <property type="hits" value="12 hits in 117 CRISPR screens"/>
</dbReference>
<dbReference type="ChiTaRS" id="Uimc1">
    <property type="organism name" value="mouse"/>
</dbReference>
<dbReference type="PRO" id="PR:Q5U5Q9"/>
<dbReference type="Proteomes" id="UP000000589">
    <property type="component" value="Unplaced"/>
</dbReference>
<dbReference type="RNAct" id="Q5U5Q9">
    <property type="molecule type" value="protein"/>
</dbReference>
<dbReference type="GO" id="GO:0070531">
    <property type="term" value="C:BRCA1-A complex"/>
    <property type="evidence" value="ECO:0000250"/>
    <property type="project" value="UniProtKB"/>
</dbReference>
<dbReference type="GO" id="GO:0005634">
    <property type="term" value="C:nucleus"/>
    <property type="evidence" value="ECO:0000250"/>
    <property type="project" value="UniProtKB"/>
</dbReference>
<dbReference type="GO" id="GO:0003677">
    <property type="term" value="F:DNA binding"/>
    <property type="evidence" value="ECO:0007669"/>
    <property type="project" value="InterPro"/>
</dbReference>
<dbReference type="GO" id="GO:0042393">
    <property type="term" value="F:histone binding"/>
    <property type="evidence" value="ECO:0000250"/>
    <property type="project" value="UniProtKB"/>
</dbReference>
<dbReference type="GO" id="GO:0070530">
    <property type="term" value="F:K63-linked polyubiquitin modification-dependent protein binding"/>
    <property type="evidence" value="ECO:0000250"/>
    <property type="project" value="UniProtKB"/>
</dbReference>
<dbReference type="GO" id="GO:0046965">
    <property type="term" value="F:nuclear retinoid X receptor binding"/>
    <property type="evidence" value="ECO:0000314"/>
    <property type="project" value="MGI"/>
</dbReference>
<dbReference type="GO" id="GO:0008270">
    <property type="term" value="F:zinc ion binding"/>
    <property type="evidence" value="ECO:0007669"/>
    <property type="project" value="UniProtKB-KW"/>
</dbReference>
<dbReference type="GO" id="GO:0006325">
    <property type="term" value="P:chromatin organization"/>
    <property type="evidence" value="ECO:0007669"/>
    <property type="project" value="UniProtKB-KW"/>
</dbReference>
<dbReference type="GO" id="GO:0006302">
    <property type="term" value="P:double-strand break repair"/>
    <property type="evidence" value="ECO:0000250"/>
    <property type="project" value="UniProtKB"/>
</dbReference>
<dbReference type="GO" id="GO:0007095">
    <property type="term" value="P:mitotic G2 DNA damage checkpoint signaling"/>
    <property type="evidence" value="ECO:0000250"/>
    <property type="project" value="UniProtKB"/>
</dbReference>
<dbReference type="GO" id="GO:0044818">
    <property type="term" value="P:mitotic G2/M transition checkpoint"/>
    <property type="evidence" value="ECO:0000303"/>
    <property type="project" value="ComplexPortal"/>
</dbReference>
<dbReference type="GO" id="GO:0045892">
    <property type="term" value="P:negative regulation of DNA-templated transcription"/>
    <property type="evidence" value="ECO:0000250"/>
    <property type="project" value="HGNC-UCL"/>
</dbReference>
<dbReference type="GO" id="GO:0045739">
    <property type="term" value="P:positive regulation of DNA repair"/>
    <property type="evidence" value="ECO:0000250"/>
    <property type="project" value="UniProtKB"/>
</dbReference>
<dbReference type="GO" id="GO:0006282">
    <property type="term" value="P:regulation of DNA repair"/>
    <property type="evidence" value="ECO:0000303"/>
    <property type="project" value="ComplexPortal"/>
</dbReference>
<dbReference type="GO" id="GO:0010212">
    <property type="term" value="P:response to ionizing radiation"/>
    <property type="evidence" value="ECO:0000250"/>
    <property type="project" value="UniProtKB"/>
</dbReference>
<dbReference type="CDD" id="cd20912">
    <property type="entry name" value="AIR_RAP80-like"/>
    <property type="match status" value="1"/>
</dbReference>
<dbReference type="Gene3D" id="6.10.250.1800">
    <property type="match status" value="1"/>
</dbReference>
<dbReference type="InterPro" id="IPR006642">
    <property type="entry name" value="Rad18_UBZ4"/>
</dbReference>
<dbReference type="InterPro" id="IPR038868">
    <property type="entry name" value="RAP80"/>
</dbReference>
<dbReference type="InterPro" id="IPR040714">
    <property type="entry name" value="RAP80_UIM"/>
</dbReference>
<dbReference type="InterPro" id="IPR003903">
    <property type="entry name" value="UIM_dom"/>
</dbReference>
<dbReference type="PANTHER" id="PTHR15932:SF2">
    <property type="entry name" value="BRCA1-A COMPLEX SUBUNIT RAP80"/>
    <property type="match status" value="1"/>
</dbReference>
<dbReference type="PANTHER" id="PTHR15932">
    <property type="entry name" value="UBIQUITIN INTERACTION MOTIF-CONTAINING PROTEIN 1"/>
    <property type="match status" value="1"/>
</dbReference>
<dbReference type="Pfam" id="PF18282">
    <property type="entry name" value="RAP80_UIM"/>
    <property type="match status" value="1"/>
</dbReference>
<dbReference type="SMART" id="SM00726">
    <property type="entry name" value="UIM"/>
    <property type="match status" value="2"/>
</dbReference>
<dbReference type="PROSITE" id="PS50330">
    <property type="entry name" value="UIM"/>
    <property type="match status" value="1"/>
</dbReference>
<dbReference type="PROSITE" id="PS51908">
    <property type="entry name" value="ZF_UBZ4"/>
    <property type="match status" value="1"/>
</dbReference>